<sequence>MGMLDVSLHKITQKSQSLLHRTADRHLRLAVTGLSGAGKTAFITGLVNQLLNSGAVSTVSHSRQNGLPLWQVSREQRLLGVKRAMQPDLEIASFDYQGAMLALTSNPPTWPESTRTISELRLAIKYRPEKGLLAKFADAATLYLDIVDYPGEWLLDLPMLRQSYIEWCTTQQQRIAVLKSSPLYAGFETSLNALNLAAMADESELKRLADQYQQLLHDLVHVQGYYQAQPGRMLLPGEWQGAPLLAFFPLLSVTNAQWSNLKQSDKHSAFHVLEKRYQEYVAKVVKPFYKQHFAGFDRQVVLVDCFSALNRGKSQFEDMGAALNAIMESFQYGQSSYLRRLFAPRIDRLLFAASKVDHVTRDQQSHVLSLLTDMLKHSQHFAGFEGCKVETMAISAIKATRHGMVTTQEGDVEVVQGTGLNGQALTLFPGEVPTRLPEPDFWREQGFNFIGFAPPDNTNVDPSSVHFDHIRLDHLLQYLVGDKLE</sequence>
<accession>Q8EG04</accession>
<feature type="chain" id="PRO_0000460356" description="Ras-like GTPase YcjX">
    <location>
        <begin position="1"/>
        <end position="485"/>
    </location>
</feature>
<feature type="short sequence motif" description="Walker A motif" evidence="3">
    <location>
        <begin position="33"/>
        <end position="40"/>
    </location>
</feature>
<feature type="binding site" evidence="1 7">
    <location>
        <position position="35"/>
    </location>
    <ligand>
        <name>GTP</name>
        <dbReference type="ChEBI" id="CHEBI:37565"/>
    </ligand>
</feature>
<feature type="binding site" evidence="1 6 7 8">
    <location>
        <position position="36"/>
    </location>
    <ligand>
        <name>GDP</name>
        <dbReference type="ChEBI" id="CHEBI:58189"/>
    </ligand>
</feature>
<feature type="binding site" evidence="1 7">
    <location>
        <position position="36"/>
    </location>
    <ligand>
        <name>GTP</name>
        <dbReference type="ChEBI" id="CHEBI:37565"/>
    </ligand>
</feature>
<feature type="binding site" evidence="1 6 7 8">
    <location>
        <position position="38"/>
    </location>
    <ligand>
        <name>GDP</name>
        <dbReference type="ChEBI" id="CHEBI:58189"/>
    </ligand>
</feature>
<feature type="binding site" evidence="1 7">
    <location>
        <position position="38"/>
    </location>
    <ligand>
        <name>GTP</name>
        <dbReference type="ChEBI" id="CHEBI:37565"/>
    </ligand>
</feature>
<feature type="binding site" evidence="1 6 7 8">
    <location>
        <position position="39"/>
    </location>
    <ligand>
        <name>GDP</name>
        <dbReference type="ChEBI" id="CHEBI:58189"/>
    </ligand>
</feature>
<feature type="binding site" evidence="1 7">
    <location>
        <position position="39"/>
    </location>
    <ligand>
        <name>GTP</name>
        <dbReference type="ChEBI" id="CHEBI:37565"/>
    </ligand>
</feature>
<feature type="binding site" evidence="1 6 7 8">
    <location>
        <position position="40"/>
    </location>
    <ligand>
        <name>GDP</name>
        <dbReference type="ChEBI" id="CHEBI:58189"/>
    </ligand>
</feature>
<feature type="binding site" evidence="1 7">
    <location>
        <position position="40"/>
    </location>
    <ligand>
        <name>GTP</name>
        <dbReference type="ChEBI" id="CHEBI:37565"/>
    </ligand>
</feature>
<feature type="binding site" evidence="1 6 7 8">
    <location>
        <position position="41"/>
    </location>
    <ligand>
        <name>GDP</name>
        <dbReference type="ChEBI" id="CHEBI:58189"/>
    </ligand>
</feature>
<feature type="binding site" evidence="1 7">
    <location>
        <position position="41"/>
    </location>
    <ligand>
        <name>GTP</name>
        <dbReference type="ChEBI" id="CHEBI:37565"/>
    </ligand>
</feature>
<feature type="binding site" evidence="1 6 7 8">
    <location>
        <position position="110"/>
    </location>
    <ligand>
        <name>GDP</name>
        <dbReference type="ChEBI" id="CHEBI:58189"/>
    </ligand>
</feature>
<feature type="binding site" evidence="1 7">
    <location>
        <position position="110"/>
    </location>
    <ligand>
        <name>GTP</name>
        <dbReference type="ChEBI" id="CHEBI:37565"/>
    </ligand>
</feature>
<feature type="binding site" evidence="1 6 8">
    <location>
        <position position="113"/>
    </location>
    <ligand>
        <name>GDP</name>
        <dbReference type="ChEBI" id="CHEBI:58189"/>
    </ligand>
</feature>
<feature type="binding site" evidence="1 7">
    <location>
        <position position="113"/>
    </location>
    <ligand>
        <name>GTP</name>
        <dbReference type="ChEBI" id="CHEBI:37565"/>
    </ligand>
</feature>
<feature type="binding site" evidence="1 6 7">
    <location>
        <position position="114"/>
    </location>
    <ligand>
        <name>GDP</name>
        <dbReference type="ChEBI" id="CHEBI:58189"/>
    </ligand>
</feature>
<feature type="binding site" evidence="1 7">
    <location>
        <position position="114"/>
    </location>
    <ligand>
        <name>GTP</name>
        <dbReference type="ChEBI" id="CHEBI:37565"/>
    </ligand>
</feature>
<feature type="binding site" evidence="1 7">
    <location>
        <position position="115"/>
    </location>
    <ligand>
        <name>GTP</name>
        <dbReference type="ChEBI" id="CHEBI:37565"/>
    </ligand>
</feature>
<feature type="binding site" evidence="1 6 7 8">
    <location>
        <position position="355"/>
    </location>
    <ligand>
        <name>GDP</name>
        <dbReference type="ChEBI" id="CHEBI:58189"/>
    </ligand>
</feature>
<feature type="binding site" evidence="1 7">
    <location>
        <position position="355"/>
    </location>
    <ligand>
        <name>GTP</name>
        <dbReference type="ChEBI" id="CHEBI:37565"/>
    </ligand>
</feature>
<feature type="binding site" evidence="1 6 7 8">
    <location>
        <position position="357"/>
    </location>
    <ligand>
        <name>GDP</name>
        <dbReference type="ChEBI" id="CHEBI:58189"/>
    </ligand>
</feature>
<feature type="binding site" evidence="1 7">
    <location>
        <position position="357"/>
    </location>
    <ligand>
        <name>GTP</name>
        <dbReference type="ChEBI" id="CHEBI:37565"/>
    </ligand>
</feature>
<feature type="binding site" evidence="1 6 8">
    <location>
        <position position="358"/>
    </location>
    <ligand>
        <name>GDP</name>
        <dbReference type="ChEBI" id="CHEBI:58189"/>
    </ligand>
</feature>
<feature type="binding site" evidence="1 7">
    <location>
        <position position="358"/>
    </location>
    <ligand>
        <name>GTP</name>
        <dbReference type="ChEBI" id="CHEBI:37565"/>
    </ligand>
</feature>
<feature type="binding site" evidence="1 6">
    <location>
        <position position="395"/>
    </location>
    <ligand>
        <name>GDP</name>
        <dbReference type="ChEBI" id="CHEBI:58189"/>
    </ligand>
</feature>
<feature type="binding site" evidence="1 6">
    <location>
        <position position="396"/>
    </location>
    <ligand>
        <name>GDP</name>
        <dbReference type="ChEBI" id="CHEBI:58189"/>
    </ligand>
</feature>
<feature type="binding site" evidence="1 6 7 8">
    <location>
        <position position="397"/>
    </location>
    <ligand>
        <name>GDP</name>
        <dbReference type="ChEBI" id="CHEBI:58189"/>
    </ligand>
</feature>
<feature type="binding site" evidence="1 7">
    <location>
        <position position="397"/>
    </location>
    <ligand>
        <name>GTP</name>
        <dbReference type="ChEBI" id="CHEBI:37565"/>
    </ligand>
</feature>
<feature type="mutagenesis site" description="Significantly decreased GTPase activity." evidence="1">
    <original>K</original>
    <variation>A</variation>
    <location>
        <position position="39"/>
    </location>
</feature>
<feature type="mutagenesis site" description="Loss of GTPase activity." evidence="1">
    <original>T</original>
    <variation>A</variation>
    <location>
        <position position="114"/>
    </location>
</feature>
<feature type="mutagenesis site" description="Decreased GTPase activity." evidence="1">
    <original>E</original>
    <variation>A</variation>
    <location>
        <position position="152"/>
    </location>
</feature>
<feature type="mutagenesis site" description="Significantly decreased GTPase activity." evidence="1">
    <original>L</original>
    <variation>A</variation>
    <location>
        <position position="235"/>
    </location>
</feature>
<feature type="mutagenesis site" description="Significantly increased GTPase activity." evidence="1">
    <original>P</original>
    <variation>A</variation>
    <location>
        <position position="236"/>
    </location>
</feature>
<feature type="mutagenesis site" description="Significantly decreased GTPase activity." evidence="1">
    <original>W</original>
    <variation>A</variation>
    <location>
        <position position="239"/>
    </location>
</feature>
<feature type="helix" evidence="9">
    <location>
        <begin position="20"/>
        <end position="22"/>
    </location>
</feature>
<feature type="strand" evidence="9">
    <location>
        <begin position="25"/>
        <end position="34"/>
    </location>
</feature>
<feature type="helix" evidence="9">
    <location>
        <begin position="39"/>
        <end position="51"/>
    </location>
</feature>
<feature type="turn" evidence="9">
    <location>
        <begin position="58"/>
        <end position="60"/>
    </location>
</feature>
<feature type="helix" evidence="9">
    <location>
        <begin position="71"/>
        <end position="74"/>
    </location>
</feature>
<feature type="strand" evidence="9">
    <location>
        <begin position="78"/>
        <end position="84"/>
    </location>
</feature>
<feature type="strand" evidence="10">
    <location>
        <begin position="91"/>
        <end position="93"/>
    </location>
</feature>
<feature type="helix" evidence="9">
    <location>
        <begin position="96"/>
        <end position="103"/>
    </location>
</feature>
<feature type="strand" evidence="9">
    <location>
        <begin position="105"/>
        <end position="107"/>
    </location>
</feature>
<feature type="strand" evidence="9">
    <location>
        <begin position="118"/>
        <end position="126"/>
    </location>
</feature>
<feature type="strand" evidence="9">
    <location>
        <begin position="140"/>
        <end position="148"/>
    </location>
</feature>
<feature type="helix" evidence="9">
    <location>
        <begin position="151"/>
        <end position="160"/>
    </location>
</feature>
<feature type="helix" evidence="9">
    <location>
        <begin position="164"/>
        <end position="172"/>
    </location>
</feature>
<feature type="helix" evidence="9">
    <location>
        <begin position="175"/>
        <end position="178"/>
    </location>
</feature>
<feature type="helix" evidence="9">
    <location>
        <begin position="184"/>
        <end position="193"/>
    </location>
</feature>
<feature type="strand" evidence="9">
    <location>
        <begin position="196"/>
        <end position="199"/>
    </location>
</feature>
<feature type="helix" evidence="9">
    <location>
        <begin position="202"/>
        <end position="221"/>
    </location>
</feature>
<feature type="helix" evidence="9">
    <location>
        <begin position="231"/>
        <end position="233"/>
    </location>
</feature>
<feature type="helix" evidence="9">
    <location>
        <begin position="237"/>
        <end position="239"/>
    </location>
</feature>
<feature type="helix" evidence="9">
    <location>
        <begin position="243"/>
        <end position="245"/>
    </location>
</feature>
<feature type="turn" evidence="9">
    <location>
        <begin position="255"/>
        <end position="257"/>
    </location>
</feature>
<feature type="helix" evidence="9">
    <location>
        <begin position="258"/>
        <end position="262"/>
    </location>
</feature>
<feature type="helix" evidence="9">
    <location>
        <begin position="269"/>
        <end position="283"/>
    </location>
</feature>
<feature type="helix" evidence="9">
    <location>
        <begin position="285"/>
        <end position="291"/>
    </location>
</feature>
<feature type="helix" evidence="9">
    <location>
        <begin position="293"/>
        <end position="295"/>
    </location>
</feature>
<feature type="strand" evidence="9">
    <location>
        <begin position="297"/>
        <end position="303"/>
    </location>
</feature>
<feature type="helix" evidence="9">
    <location>
        <begin position="305"/>
        <end position="311"/>
    </location>
</feature>
<feature type="helix" evidence="9">
    <location>
        <begin position="313"/>
        <end position="327"/>
    </location>
</feature>
<feature type="helix" evidence="9">
    <location>
        <begin position="328"/>
        <end position="330"/>
    </location>
</feature>
<feature type="strand" evidence="10">
    <location>
        <begin position="333"/>
        <end position="335"/>
    </location>
</feature>
<feature type="helix" evidence="9">
    <location>
        <begin position="337"/>
        <end position="340"/>
    </location>
</feature>
<feature type="strand" evidence="9">
    <location>
        <begin position="348"/>
        <end position="353"/>
    </location>
</feature>
<feature type="helix" evidence="9">
    <location>
        <begin position="356"/>
        <end position="358"/>
    </location>
</feature>
<feature type="helix" evidence="9">
    <location>
        <begin position="361"/>
        <end position="376"/>
    </location>
</feature>
<feature type="helix" evidence="9">
    <location>
        <begin position="381"/>
        <end position="383"/>
    </location>
</feature>
<feature type="strand" evidence="9">
    <location>
        <begin position="386"/>
        <end position="393"/>
    </location>
</feature>
<feature type="strand" evidence="9">
    <location>
        <begin position="395"/>
        <end position="397"/>
    </location>
</feature>
<feature type="strand" evidence="9">
    <location>
        <begin position="401"/>
        <end position="407"/>
    </location>
</feature>
<feature type="strand" evidence="9">
    <location>
        <begin position="410"/>
        <end position="419"/>
    </location>
</feature>
<feature type="strand" evidence="9">
    <location>
        <begin position="422"/>
        <end position="427"/>
    </location>
</feature>
<feature type="strand" evidence="9">
    <location>
        <begin position="434"/>
        <end position="436"/>
    </location>
</feature>
<feature type="helix" evidence="9">
    <location>
        <begin position="439"/>
        <end position="441"/>
    </location>
</feature>
<feature type="strand" evidence="9">
    <location>
        <begin position="458"/>
        <end position="460"/>
    </location>
</feature>
<feature type="helix" evidence="9">
    <location>
        <begin position="462"/>
        <end position="464"/>
    </location>
</feature>
<feature type="helix" evidence="9">
    <location>
        <begin position="472"/>
        <end position="480"/>
    </location>
</feature>
<feature type="helix" evidence="9">
    <location>
        <begin position="481"/>
        <end position="483"/>
    </location>
</feature>
<name>YCJX_SHEON</name>
<gene>
    <name evidence="2 4" type="primary">ycjX</name>
    <name evidence="2 4" type="ordered locus">SO_1810</name>
</gene>
<evidence type="ECO:0000269" key="1">
    <source>
    </source>
</evidence>
<evidence type="ECO:0000303" key="2">
    <source>
    </source>
</evidence>
<evidence type="ECO:0000305" key="3"/>
<evidence type="ECO:0000312" key="4">
    <source>
        <dbReference type="EMBL" id="AAN54862.1"/>
    </source>
</evidence>
<evidence type="ECO:0000312" key="5">
    <source>
        <dbReference type="Proteomes" id="UP000008186"/>
    </source>
</evidence>
<evidence type="ECO:0007744" key="6">
    <source>
        <dbReference type="PDB" id="6NZ4"/>
    </source>
</evidence>
<evidence type="ECO:0007744" key="7">
    <source>
        <dbReference type="PDB" id="6NZ5"/>
    </source>
</evidence>
<evidence type="ECO:0007744" key="8">
    <source>
        <dbReference type="PDB" id="6NZ6"/>
    </source>
</evidence>
<evidence type="ECO:0007829" key="9">
    <source>
        <dbReference type="PDB" id="6NZ4"/>
    </source>
</evidence>
<evidence type="ECO:0007829" key="10">
    <source>
        <dbReference type="PDB" id="6NZ6"/>
    </source>
</evidence>
<comment type="function">
    <text evidence="1">Binds GTP and GDP. Has intrinsic GTPase activity. Does not hydrolyze ATP. May act as a transducer of stress responses.</text>
</comment>
<comment type="catalytic activity">
    <reaction evidence="1">
        <text>GTP + H2O = GDP + phosphate + H(+)</text>
        <dbReference type="Rhea" id="RHEA:19669"/>
        <dbReference type="ChEBI" id="CHEBI:15377"/>
        <dbReference type="ChEBI" id="CHEBI:15378"/>
        <dbReference type="ChEBI" id="CHEBI:37565"/>
        <dbReference type="ChEBI" id="CHEBI:43474"/>
        <dbReference type="ChEBI" id="CHEBI:58189"/>
        <dbReference type="EC" id="3.6.5.2"/>
    </reaction>
</comment>
<comment type="cofactor">
    <cofactor evidence="1">
        <name>Mg(2+)</name>
        <dbReference type="ChEBI" id="CHEBI:18420"/>
    </cofactor>
</comment>
<comment type="activity regulation">
    <text evidence="1">Alternates between an inactive form bound to GDP and an active form bound to GTP. Likely activated by a guanine nucleotide-exchange factor (GEF).</text>
</comment>
<comment type="subunit">
    <text evidence="1">Monomer in solution.</text>
</comment>
<protein>
    <recommendedName>
        <fullName evidence="2">Ras-like GTPase YcjX</fullName>
        <ecNumber evidence="1">3.6.5.2</ecNumber>
    </recommendedName>
    <alternativeName>
        <fullName evidence="2">Stress protein YcjX</fullName>
    </alternativeName>
</protein>
<organism evidence="4 5">
    <name type="scientific">Shewanella oneidensis (strain ATCC 700550 / JCM 31522 / CIP 106686 / LMG 19005 / NCIMB 14063 / MR-1)</name>
    <dbReference type="NCBI Taxonomy" id="211586"/>
    <lineage>
        <taxon>Bacteria</taxon>
        <taxon>Pseudomonadati</taxon>
        <taxon>Pseudomonadota</taxon>
        <taxon>Gammaproteobacteria</taxon>
        <taxon>Alteromonadales</taxon>
        <taxon>Shewanellaceae</taxon>
        <taxon>Shewanella</taxon>
    </lineage>
</organism>
<reference evidence="4 5" key="1">
    <citation type="journal article" date="2002" name="Nat. Biotechnol.">
        <title>Genome sequence of the dissimilatory metal ion-reducing bacterium Shewanella oneidensis.</title>
        <authorList>
            <person name="Heidelberg J.F."/>
            <person name="Paulsen I.T."/>
            <person name="Nelson K.E."/>
            <person name="Gaidos E.J."/>
            <person name="Nelson W.C."/>
            <person name="Read T.D."/>
            <person name="Eisen J.A."/>
            <person name="Seshadri R."/>
            <person name="Ward N.L."/>
            <person name="Methe B.A."/>
            <person name="Clayton R.A."/>
            <person name="Meyer T."/>
            <person name="Tsapin A."/>
            <person name="Scott J."/>
            <person name="Beanan M.J."/>
            <person name="Brinkac L.M."/>
            <person name="Daugherty S.C."/>
            <person name="DeBoy R.T."/>
            <person name="Dodson R.J."/>
            <person name="Durkin A.S."/>
            <person name="Haft D.H."/>
            <person name="Kolonay J.F."/>
            <person name="Madupu R."/>
            <person name="Peterson J.D."/>
            <person name="Umayam L.A."/>
            <person name="White O."/>
            <person name="Wolf A.M."/>
            <person name="Vamathevan J.J."/>
            <person name="Weidman J.F."/>
            <person name="Impraim M."/>
            <person name="Lee K."/>
            <person name="Berry K.J."/>
            <person name="Lee C."/>
            <person name="Mueller J."/>
            <person name="Khouri H.M."/>
            <person name="Gill J."/>
            <person name="Utterback T.R."/>
            <person name="McDonald L.A."/>
            <person name="Feldblyum T.V."/>
            <person name="Smith H.O."/>
            <person name="Venter J.C."/>
            <person name="Nealson K.H."/>
            <person name="Fraser C.M."/>
        </authorList>
    </citation>
    <scope>NUCLEOTIDE SEQUENCE [LARGE SCALE GENOMIC DNA]</scope>
    <source>
        <strain evidence="4 5">ATCC 700550 / JCM 31522 / CIP 106686 / LMG 19005 / NCIMB 14063 / MR-1</strain>
    </source>
</reference>
<reference evidence="6 7" key="2">
    <citation type="journal article" date="2019" name="J. Mol. Biol.">
        <title>Crystal Structure of the YcjX Stress Protein Reveals a Ras-Like GTP-Binding Protein.</title>
        <authorList>
            <person name="Tsai J.T."/>
            <person name="Sung N."/>
            <person name="Lee J."/>
            <person name="Chang C."/>
            <person name="Lee S."/>
            <person name="Tsai F.T.F."/>
        </authorList>
    </citation>
    <scope>X-RAY CRYSTALLOGRAPHY (1.92 ANGSTROMS) IN COMPLEX WITH GDP AND GTP ANALOG GDPCP</scope>
    <scope>FUNCTION</scope>
    <scope>CATALYTIC ACTIVITY</scope>
    <scope>COFACTOR</scope>
    <scope>ACTIVITY REGULATION</scope>
    <scope>SUBUNIT</scope>
    <scope>MUTAGENESIS OF LYS-39; THR-114; GLU-152; LEU-235; PRO-236 AND TRP-239</scope>
    <scope>REACTION MECHANISM</scope>
    <source>
        <strain evidence="2">ATCC 700550 / JCM 31522 / CIP 106686 / LMG 19005 / NCIMB 14063 / MR-1</strain>
    </source>
</reference>
<dbReference type="EC" id="3.6.5.2" evidence="1"/>
<dbReference type="EMBL" id="AE014299">
    <property type="protein sequence ID" value="AAN54862.1"/>
    <property type="molecule type" value="Genomic_DNA"/>
</dbReference>
<dbReference type="RefSeq" id="NP_717418.1">
    <property type="nucleotide sequence ID" value="NC_004347.2"/>
</dbReference>
<dbReference type="RefSeq" id="WP_011071931.1">
    <property type="nucleotide sequence ID" value="NC_004347.2"/>
</dbReference>
<dbReference type="PDB" id="6NZ4">
    <property type="method" value="X-ray"/>
    <property type="resolution" value="1.92 A"/>
    <property type="chains" value="A/B=1-485"/>
</dbReference>
<dbReference type="PDB" id="6NZ5">
    <property type="method" value="X-ray"/>
    <property type="resolution" value="2.23 A"/>
    <property type="chains" value="A/B=1-485"/>
</dbReference>
<dbReference type="PDB" id="6NZ6">
    <property type="method" value="X-ray"/>
    <property type="resolution" value="1.95 A"/>
    <property type="chains" value="A/B=1-485"/>
</dbReference>
<dbReference type="PDBsum" id="6NZ4"/>
<dbReference type="PDBsum" id="6NZ5"/>
<dbReference type="PDBsum" id="6NZ6"/>
<dbReference type="SMR" id="Q8EG04"/>
<dbReference type="STRING" id="211586.SO_1810"/>
<dbReference type="PaxDb" id="211586-SO_1810"/>
<dbReference type="KEGG" id="son:SO_1810"/>
<dbReference type="PATRIC" id="fig|211586.12.peg.1740"/>
<dbReference type="eggNOG" id="COG3106">
    <property type="taxonomic scope" value="Bacteria"/>
</dbReference>
<dbReference type="HOGENOM" id="CLU_043657_0_0_6"/>
<dbReference type="OrthoDB" id="9777645at2"/>
<dbReference type="PhylomeDB" id="Q8EG04"/>
<dbReference type="BioCyc" id="SONE211586:G1GMP-1661-MONOMER"/>
<dbReference type="Proteomes" id="UP000008186">
    <property type="component" value="Chromosome"/>
</dbReference>
<dbReference type="GO" id="GO:0019003">
    <property type="term" value="F:GDP binding"/>
    <property type="evidence" value="ECO:0000314"/>
    <property type="project" value="UniProtKB"/>
</dbReference>
<dbReference type="GO" id="GO:0005525">
    <property type="term" value="F:GTP binding"/>
    <property type="evidence" value="ECO:0000314"/>
    <property type="project" value="UniProtKB"/>
</dbReference>
<dbReference type="GO" id="GO:0003924">
    <property type="term" value="F:GTPase activity"/>
    <property type="evidence" value="ECO:0000314"/>
    <property type="project" value="UniProtKB"/>
</dbReference>
<dbReference type="InterPro" id="IPR007413">
    <property type="entry name" value="YcjX-like"/>
</dbReference>
<dbReference type="PANTHER" id="PTHR38605:SF1">
    <property type="entry name" value="ATPASE"/>
    <property type="match status" value="1"/>
</dbReference>
<dbReference type="PANTHER" id="PTHR38605">
    <property type="entry name" value="ATPASE-RELATED"/>
    <property type="match status" value="1"/>
</dbReference>
<dbReference type="Pfam" id="PF04317">
    <property type="entry name" value="DUF463"/>
    <property type="match status" value="1"/>
</dbReference>
<dbReference type="PIRSF" id="PIRSF019381">
    <property type="entry name" value="YcjX"/>
    <property type="match status" value="1"/>
</dbReference>
<proteinExistence type="evidence at protein level"/>
<keyword id="KW-0002">3D-structure</keyword>
<keyword id="KW-0342">GTP-binding</keyword>
<keyword id="KW-0378">Hydrolase</keyword>
<keyword id="KW-0547">Nucleotide-binding</keyword>
<keyword id="KW-1185">Reference proteome</keyword>